<feature type="chain" id="PRO_0000077896" description="Uncharacterized protein HI_0210">
    <location>
        <begin position="1"/>
        <end position="35"/>
    </location>
</feature>
<reference key="1">
    <citation type="journal article" date="1995" name="Science">
        <title>Whole-genome random sequencing and assembly of Haemophilus influenzae Rd.</title>
        <authorList>
            <person name="Fleischmann R.D."/>
            <person name="Adams M.D."/>
            <person name="White O."/>
            <person name="Clayton R.A."/>
            <person name="Kirkness E.F."/>
            <person name="Kerlavage A.R."/>
            <person name="Bult C.J."/>
            <person name="Tomb J.-F."/>
            <person name="Dougherty B.A."/>
            <person name="Merrick J.M."/>
            <person name="McKenney K."/>
            <person name="Sutton G.G."/>
            <person name="FitzHugh W."/>
            <person name="Fields C.A."/>
            <person name="Gocayne J.D."/>
            <person name="Scott J.D."/>
            <person name="Shirley R."/>
            <person name="Liu L.-I."/>
            <person name="Glodek A."/>
            <person name="Kelley J.M."/>
            <person name="Weidman J.F."/>
            <person name="Phillips C.A."/>
            <person name="Spriggs T."/>
            <person name="Hedblom E."/>
            <person name="Cotton M.D."/>
            <person name="Utterback T.R."/>
            <person name="Hanna M.C."/>
            <person name="Nguyen D.T."/>
            <person name="Saudek D.M."/>
            <person name="Brandon R.C."/>
            <person name="Fine L.D."/>
            <person name="Fritchman J.L."/>
            <person name="Fuhrmann J.L."/>
            <person name="Geoghagen N.S.M."/>
            <person name="Gnehm C.L."/>
            <person name="McDonald L.A."/>
            <person name="Small K.V."/>
            <person name="Fraser C.M."/>
            <person name="Smith H.O."/>
            <person name="Venter J.C."/>
        </authorList>
    </citation>
    <scope>NUCLEOTIDE SEQUENCE [LARGE SCALE GENOMIC DNA]</scope>
    <source>
        <strain>ATCC 51907 / DSM 11121 / KW20 / Rd</strain>
    </source>
</reference>
<name>Y210_HAEIN</name>
<dbReference type="EMBL" id="L42023">
    <property type="protein sequence ID" value="AAC21885.1"/>
    <property type="molecule type" value="Genomic_DNA"/>
</dbReference>
<dbReference type="PIR" id="I64003">
    <property type="entry name" value="I64003"/>
</dbReference>
<dbReference type="SMR" id="P43964"/>
<dbReference type="EnsemblBacteria" id="AAC21885">
    <property type="protein sequence ID" value="AAC21885"/>
    <property type="gene ID" value="HI_0210"/>
</dbReference>
<dbReference type="KEGG" id="hin:HI_0210"/>
<dbReference type="HOGENOM" id="CLU_3365245_0_0_6"/>
<dbReference type="Proteomes" id="UP000000579">
    <property type="component" value="Chromosome"/>
</dbReference>
<organism>
    <name type="scientific">Haemophilus influenzae (strain ATCC 51907 / DSM 11121 / KW20 / Rd)</name>
    <dbReference type="NCBI Taxonomy" id="71421"/>
    <lineage>
        <taxon>Bacteria</taxon>
        <taxon>Pseudomonadati</taxon>
        <taxon>Pseudomonadota</taxon>
        <taxon>Gammaproteobacteria</taxon>
        <taxon>Pasteurellales</taxon>
        <taxon>Pasteurellaceae</taxon>
        <taxon>Haemophilus</taxon>
    </lineage>
</organism>
<sequence length="35" mass="4448">MNYFIMDKTFLEQEILLPQFIIQNIERWFKTHNFV</sequence>
<protein>
    <recommendedName>
        <fullName>Uncharacterized protein HI_0210</fullName>
    </recommendedName>
</protein>
<gene>
    <name type="ordered locus">HI_0210</name>
</gene>
<proteinExistence type="predicted"/>
<accession>P43964</accession>
<keyword id="KW-1185">Reference proteome</keyword>